<dbReference type="EMBL" id="KC757347">
    <property type="protein sequence ID" value="AHG06296.1"/>
    <property type="molecule type" value="mRNA"/>
</dbReference>
<dbReference type="RefSeq" id="XP_037775985.1">
    <property type="nucleotide sequence ID" value="XM_037920057.1"/>
</dbReference>
<dbReference type="SMR" id="B3EWG0"/>
<dbReference type="EnsemblMetazoa" id="XM_037920057.1">
    <property type="protein sequence ID" value="XP_037775985.1"/>
    <property type="gene ID" value="LOC119573059"/>
</dbReference>
<dbReference type="GeneID" id="119573059"/>
<dbReference type="OrthoDB" id="6159864at2759"/>
<dbReference type="GO" id="GO:0005576">
    <property type="term" value="C:extracellular region"/>
    <property type="evidence" value="ECO:0007669"/>
    <property type="project" value="UniProtKB-SubCell"/>
</dbReference>
<dbReference type="GO" id="GO:0005179">
    <property type="term" value="F:hormone activity"/>
    <property type="evidence" value="ECO:0007669"/>
    <property type="project" value="UniProtKB-KW"/>
</dbReference>
<dbReference type="GO" id="GO:0031409">
    <property type="term" value="F:pigment binding"/>
    <property type="evidence" value="ECO:0007669"/>
    <property type="project" value="UniProtKB-KW"/>
</dbReference>
<dbReference type="InterPro" id="IPR002047">
    <property type="entry name" value="Adipokinetic_hormone_CS"/>
</dbReference>
<dbReference type="InterPro" id="IPR010475">
    <property type="entry name" value="AKH/RPCH_hormone"/>
</dbReference>
<dbReference type="Pfam" id="PF06377">
    <property type="entry name" value="Adipokin_hormo"/>
    <property type="match status" value="1"/>
</dbReference>
<dbReference type="PROSITE" id="PS00256">
    <property type="entry name" value="AKH"/>
    <property type="match status" value="1"/>
</dbReference>
<protein>
    <recommendedName>
        <fullName evidence="6">Red pigment-concentrating hormone</fullName>
        <shortName evidence="6">PmRPCH</shortName>
        <shortName evidence="6">RPCH</shortName>
    </recommendedName>
</protein>
<sequence>MVRAVVATLLVVLVVASCVSAQLNFSPGWGKRAAAGGEGTGMHPPAGAVVPPPSSLAGESCGTIPVTTVMHIYRLIRAEATRLVQCQDEEYLG</sequence>
<keyword id="KW-0027">Amidation</keyword>
<keyword id="KW-0165">Cleavage on pair of basic residues</keyword>
<keyword id="KW-0903">Direct protein sequencing</keyword>
<keyword id="KW-0372">Hormone</keyword>
<keyword id="KW-0608">Pigment</keyword>
<keyword id="KW-0873">Pyrrolidone carboxylic acid</keyword>
<keyword id="KW-0964">Secreted</keyword>
<keyword id="KW-0732">Signal</keyword>
<comment type="function">
    <text evidence="1">This hormone adapts the animal to light backgrounds by stimulating concentration of the pigment of its red body-chromatophores.</text>
</comment>
<comment type="subcellular location">
    <subcellularLocation>
        <location evidence="1">Secreted</location>
    </subcellularLocation>
</comment>
<comment type="tissue specificity">
    <text evidence="4">Strongly expressed in the eyestalk and weakly in brain. Not expressed in other tissues tested.</text>
</comment>
<comment type="developmental stage">
    <text evidence="4">Expression changes during the molting cycle with highest expression in the late pre-molt and post-molt stages, intermediate expression in the intermolt stage and lowest expression in the early pre-molt stage.</text>
</comment>
<comment type="induction">
    <text evidence="4">Temporarily up-regulated under high salt conditions.</text>
</comment>
<comment type="similarity">
    <text evidence="2">Belongs to the AKH/HRTH/RPCH family.</text>
</comment>
<accession>B3EWG0</accession>
<accession>W0K8U8</accession>
<evidence type="ECO:0000250" key="1">
    <source>
        <dbReference type="UniProtKB" id="P08939"/>
    </source>
</evidence>
<evidence type="ECO:0000255" key="2"/>
<evidence type="ECO:0000256" key="3">
    <source>
        <dbReference type="SAM" id="MobiDB-lite"/>
    </source>
</evidence>
<evidence type="ECO:0000269" key="4">
    <source>
    </source>
</evidence>
<evidence type="ECO:0000269" key="5">
    <source ref="2"/>
</evidence>
<evidence type="ECO:0000303" key="6">
    <source>
    </source>
</evidence>
<evidence type="ECO:0000305" key="7"/>
<evidence type="ECO:0000312" key="8">
    <source>
        <dbReference type="EMBL" id="AHG06296.1"/>
    </source>
</evidence>
<reference evidence="8" key="1">
    <citation type="journal article" date="2014" name="Comp. Biochem. Physiol.">
        <title>Molecular characterization of a cDNA encoding red pigment-concentrating hormone in black tiger shrimp Penaeus monodon: Implication of its function in molt and osmoregulation.</title>
        <authorList>
            <person name="Sathapondecha P."/>
            <person name="Panyim S."/>
            <person name="Udomkit A."/>
        </authorList>
    </citation>
    <scope>NUCLEOTIDE SEQUENCE [MRNA]</scope>
    <scope>TISSUE SPECIFICITY</scope>
    <scope>DEVELOPMENTAL STAGE</scope>
    <scope>INDUCTION BY HYPERSALINITY</scope>
    <source>
        <tissue evidence="6">Eyestalk</tissue>
    </source>
</reference>
<reference evidence="7" key="2">
    <citation type="submission" date="2012-01" db="UniProtKB">
        <title>Identification of Red pigment Concentrating Hormone in CNS of Penaeus monodon.</title>
        <authorList>
            <person name="Chansela P."/>
            <person name="Kornthong N."/>
            <person name="Hanna P."/>
            <person name="Setou M."/>
            <person name="Sobhon P."/>
        </authorList>
    </citation>
    <scope>PROTEIN SEQUENCE OF 22-29</scope>
    <scope>PYROGLUTAMATE FORMATION AT GLN-22</scope>
    <scope>AMIDATION AT TRP-29</scope>
    <source>
        <tissue evidence="5">CNS</tissue>
    </source>
</reference>
<feature type="signal peptide" evidence="5">
    <location>
        <begin position="1"/>
        <end position="21"/>
    </location>
</feature>
<feature type="peptide" id="PRO_0000416054" description="Red pigment-concentrating hormone" evidence="5">
    <location>
        <begin position="22"/>
        <end position="29"/>
    </location>
</feature>
<feature type="propeptide" id="PRO_0000444750" evidence="7">
    <location>
        <begin position="33"/>
        <end position="93"/>
    </location>
</feature>
<feature type="region of interest" description="Disordered" evidence="3">
    <location>
        <begin position="34"/>
        <end position="56"/>
    </location>
</feature>
<feature type="modified residue" description="Pyrrolidone carboxylic acid" evidence="5">
    <location>
        <position position="22"/>
    </location>
</feature>
<feature type="modified residue" description="Tryptophan amide" evidence="5">
    <location>
        <position position="29"/>
    </location>
</feature>
<organism>
    <name type="scientific">Penaeus monodon</name>
    <name type="common">Giant tiger prawn</name>
    <dbReference type="NCBI Taxonomy" id="6687"/>
    <lineage>
        <taxon>Eukaryota</taxon>
        <taxon>Metazoa</taxon>
        <taxon>Ecdysozoa</taxon>
        <taxon>Arthropoda</taxon>
        <taxon>Crustacea</taxon>
        <taxon>Multicrustacea</taxon>
        <taxon>Malacostraca</taxon>
        <taxon>Eumalacostraca</taxon>
        <taxon>Eucarida</taxon>
        <taxon>Decapoda</taxon>
        <taxon>Dendrobranchiata</taxon>
        <taxon>Penaeoidea</taxon>
        <taxon>Penaeidae</taxon>
        <taxon>Penaeus</taxon>
    </lineage>
</organism>
<proteinExistence type="evidence at protein level"/>
<name>RPCH_PENMO</name>